<keyword id="KW-0028">Amino-acid biosynthesis</keyword>
<keyword id="KW-0220">Diaminopimelate biosynthesis</keyword>
<keyword id="KW-0378">Hydrolase</keyword>
<keyword id="KW-0457">Lysine biosynthesis</keyword>
<keyword id="KW-1185">Reference proteome</keyword>
<dbReference type="EC" id="3.5.1.47" evidence="1"/>
<dbReference type="EMBL" id="AP008937">
    <property type="protein sequence ID" value="BAG27192.1"/>
    <property type="molecule type" value="Genomic_DNA"/>
</dbReference>
<dbReference type="RefSeq" id="WP_012391181.1">
    <property type="nucleotide sequence ID" value="NC_010610.1"/>
</dbReference>
<dbReference type="SMR" id="B2GC10"/>
<dbReference type="KEGG" id="lfe:LAF_0856"/>
<dbReference type="PATRIC" id="fig|334390.5.peg.942"/>
<dbReference type="eggNOG" id="COG1473">
    <property type="taxonomic scope" value="Bacteria"/>
</dbReference>
<dbReference type="HOGENOM" id="CLU_023257_0_1_9"/>
<dbReference type="UniPathway" id="UPA00034">
    <property type="reaction ID" value="UER00024"/>
</dbReference>
<dbReference type="Proteomes" id="UP000001697">
    <property type="component" value="Chromosome"/>
</dbReference>
<dbReference type="GO" id="GO:0050118">
    <property type="term" value="F:N-acetyldiaminopimelate deacetylase activity"/>
    <property type="evidence" value="ECO:0007669"/>
    <property type="project" value="UniProtKB-UniRule"/>
</dbReference>
<dbReference type="GO" id="GO:0019877">
    <property type="term" value="P:diaminopimelate biosynthetic process"/>
    <property type="evidence" value="ECO:0007669"/>
    <property type="project" value="UniProtKB-UniRule"/>
</dbReference>
<dbReference type="GO" id="GO:0009089">
    <property type="term" value="P:lysine biosynthetic process via diaminopimelate"/>
    <property type="evidence" value="ECO:0007669"/>
    <property type="project" value="UniProtKB-UniRule"/>
</dbReference>
<dbReference type="CDD" id="cd05670">
    <property type="entry name" value="M20_Acy1_YkuR-like"/>
    <property type="match status" value="1"/>
</dbReference>
<dbReference type="FunFam" id="3.30.70.360:FF:000001">
    <property type="entry name" value="N-acetyldiaminopimelate deacetylase"/>
    <property type="match status" value="1"/>
</dbReference>
<dbReference type="Gene3D" id="3.30.70.360">
    <property type="match status" value="1"/>
</dbReference>
<dbReference type="Gene3D" id="3.40.630.10">
    <property type="entry name" value="Zn peptidases"/>
    <property type="match status" value="1"/>
</dbReference>
<dbReference type="HAMAP" id="MF_01692">
    <property type="entry name" value="DapEL"/>
    <property type="match status" value="1"/>
</dbReference>
<dbReference type="InterPro" id="IPR023905">
    <property type="entry name" value="AcetylDAP_deacetylase"/>
</dbReference>
<dbReference type="InterPro" id="IPR017439">
    <property type="entry name" value="Amidohydrolase"/>
</dbReference>
<dbReference type="InterPro" id="IPR036264">
    <property type="entry name" value="Bact_exopeptidase_dim_dom"/>
</dbReference>
<dbReference type="InterPro" id="IPR002933">
    <property type="entry name" value="Peptidase_M20"/>
</dbReference>
<dbReference type="InterPro" id="IPR011650">
    <property type="entry name" value="Peptidase_M20_dimer"/>
</dbReference>
<dbReference type="NCBIfam" id="TIGR01891">
    <property type="entry name" value="amidohydrolases"/>
    <property type="match status" value="1"/>
</dbReference>
<dbReference type="PANTHER" id="PTHR11014:SF98">
    <property type="entry name" value="N-ACETYLDIAMINOPIMELATE DEACETYLASE"/>
    <property type="match status" value="1"/>
</dbReference>
<dbReference type="PANTHER" id="PTHR11014">
    <property type="entry name" value="PEPTIDASE M20 FAMILY MEMBER"/>
    <property type="match status" value="1"/>
</dbReference>
<dbReference type="Pfam" id="PF07687">
    <property type="entry name" value="M20_dimer"/>
    <property type="match status" value="1"/>
</dbReference>
<dbReference type="Pfam" id="PF01546">
    <property type="entry name" value="Peptidase_M20"/>
    <property type="match status" value="1"/>
</dbReference>
<dbReference type="PIRSF" id="PIRSF005962">
    <property type="entry name" value="Pept_M20D_amidohydro"/>
    <property type="match status" value="1"/>
</dbReference>
<dbReference type="SUPFAM" id="SSF55031">
    <property type="entry name" value="Bacterial exopeptidase dimerisation domain"/>
    <property type="match status" value="1"/>
</dbReference>
<dbReference type="SUPFAM" id="SSF53187">
    <property type="entry name" value="Zn-dependent exopeptidases"/>
    <property type="match status" value="1"/>
</dbReference>
<evidence type="ECO:0000255" key="1">
    <source>
        <dbReference type="HAMAP-Rule" id="MF_01692"/>
    </source>
</evidence>
<proteinExistence type="inferred from homology"/>
<protein>
    <recommendedName>
        <fullName evidence="1">N-acetyldiaminopimelate deacetylase</fullName>
        <ecNumber evidence="1">3.5.1.47</ecNumber>
    </recommendedName>
</protein>
<comment type="function">
    <text evidence="1">Catalyzes the conversion of N-acetyl-diaminopimelate to diaminopimelate and acetate.</text>
</comment>
<comment type="catalytic activity">
    <reaction evidence="1">
        <text>N-acetyl-(2S,6S)-2,6-diaminopimelate + H2O = (2S,6S)-2,6-diaminopimelate + acetate</text>
        <dbReference type="Rhea" id="RHEA:20405"/>
        <dbReference type="ChEBI" id="CHEBI:15377"/>
        <dbReference type="ChEBI" id="CHEBI:30089"/>
        <dbReference type="ChEBI" id="CHEBI:57609"/>
        <dbReference type="ChEBI" id="CHEBI:58767"/>
        <dbReference type="EC" id="3.5.1.47"/>
    </reaction>
</comment>
<comment type="pathway">
    <text evidence="1">Amino-acid biosynthesis; L-lysine biosynthesis via DAP pathway; LL-2,6-diaminopimelate from (S)-tetrahydrodipicolinate (acetylase route): step 3/3.</text>
</comment>
<comment type="similarity">
    <text evidence="1">Belongs to the peptidase M20A family. N-acetyldiaminopimelate deacetylase subfamily.</text>
</comment>
<organism>
    <name type="scientific">Limosilactobacillus fermentum (strain NBRC 3956 / LMG 18251)</name>
    <name type="common">Lactobacillus fermentum</name>
    <dbReference type="NCBI Taxonomy" id="334390"/>
    <lineage>
        <taxon>Bacteria</taxon>
        <taxon>Bacillati</taxon>
        <taxon>Bacillota</taxon>
        <taxon>Bacilli</taxon>
        <taxon>Lactobacillales</taxon>
        <taxon>Lactobacillaceae</taxon>
        <taxon>Limosilactobacillus</taxon>
    </lineage>
</organism>
<sequence length="384" mass="42004">MLGTEELIQIRHHLHQIPELALQETETHAYLMEVIGKMEQDHLEILEPEDLPTAILVRVNGTAPVRTIGYRTDIDALPVQEETGLPYASTHSGVMHACGHDVHMTVALGVLDYFASHQPKDNLLFFFQPAEESEAGGQRAYELGLFEGKWRPDEFYGLHDNPALKTGVIGCRLGTLFAGTTEVDIDVLGKDGHAAFPQEANDAVVAAAALIMQVQTIISRSINPVEAGVITLGKLEAGTIRNVIAGHARIEGTIRGLTQEMIETIDRRLQDVCEGIAKSFGVTVNLALNQGGYLPVENDPALTKRFINFMQNNPAVDYVETAPAMTGEDFGYLLSKFPGTMFWLGVEDDAQLHQATLTPNEGAIQKGIDALTSFITYRSQAEED</sequence>
<name>DAPEL_LIMF3</name>
<reference key="1">
    <citation type="journal article" date="2008" name="DNA Res.">
        <title>Comparative genome analysis of Lactobacillus reuteri and Lactobacillus fermentum reveal a genomic island for reuterin and cobalamin production.</title>
        <authorList>
            <person name="Morita H."/>
            <person name="Toh H."/>
            <person name="Fukuda S."/>
            <person name="Horikawa H."/>
            <person name="Oshima K."/>
            <person name="Suzuki T."/>
            <person name="Murakami M."/>
            <person name="Hisamatsu S."/>
            <person name="Kato Y."/>
            <person name="Takizawa T."/>
            <person name="Fukuoka H."/>
            <person name="Yoshimura T."/>
            <person name="Itoh K."/>
            <person name="O'Sullivan D.J."/>
            <person name="McKay L.L."/>
            <person name="Ohno H."/>
            <person name="Kikuchi J."/>
            <person name="Masaoka T."/>
            <person name="Hattori M."/>
        </authorList>
    </citation>
    <scope>NUCLEOTIDE SEQUENCE [LARGE SCALE GENOMIC DNA]</scope>
    <source>
        <strain>NBRC 3956 / LMG 18251</strain>
    </source>
</reference>
<accession>B2GC10</accession>
<feature type="chain" id="PRO_0000376760" description="N-acetyldiaminopimelate deacetylase">
    <location>
        <begin position="1"/>
        <end position="384"/>
    </location>
</feature>
<feature type="active site" evidence="1">
    <location>
        <position position="73"/>
    </location>
</feature>
<feature type="active site" description="Proton acceptor" evidence="1">
    <location>
        <position position="132"/>
    </location>
</feature>
<gene>
    <name type="ordered locus">LAF_0856</name>
</gene>